<dbReference type="EMBL" id="BA000037">
    <property type="protein sequence ID" value="BAC93479.1"/>
    <property type="molecule type" value="Genomic_DNA"/>
</dbReference>
<dbReference type="RefSeq" id="WP_011149573.1">
    <property type="nucleotide sequence ID" value="NC_005139.1"/>
</dbReference>
<dbReference type="SMR" id="Q7MNK1"/>
<dbReference type="STRING" id="672.VV93_v1c06510"/>
<dbReference type="KEGG" id="vvy:VV0715"/>
<dbReference type="PATRIC" id="fig|196600.6.peg.734"/>
<dbReference type="eggNOG" id="COG0542">
    <property type="taxonomic scope" value="Bacteria"/>
</dbReference>
<dbReference type="HOGENOM" id="CLU_005070_4_0_6"/>
<dbReference type="Proteomes" id="UP000002675">
    <property type="component" value="Chromosome I"/>
</dbReference>
<dbReference type="GO" id="GO:0005737">
    <property type="term" value="C:cytoplasm"/>
    <property type="evidence" value="ECO:0007669"/>
    <property type="project" value="UniProtKB-SubCell"/>
</dbReference>
<dbReference type="GO" id="GO:0005524">
    <property type="term" value="F:ATP binding"/>
    <property type="evidence" value="ECO:0007669"/>
    <property type="project" value="UniProtKB-KW"/>
</dbReference>
<dbReference type="GO" id="GO:0016887">
    <property type="term" value="F:ATP hydrolysis activity"/>
    <property type="evidence" value="ECO:0007669"/>
    <property type="project" value="InterPro"/>
</dbReference>
<dbReference type="GO" id="GO:0034605">
    <property type="term" value="P:cellular response to heat"/>
    <property type="evidence" value="ECO:0007669"/>
    <property type="project" value="TreeGrafter"/>
</dbReference>
<dbReference type="GO" id="GO:0042026">
    <property type="term" value="P:protein refolding"/>
    <property type="evidence" value="ECO:0007669"/>
    <property type="project" value="InterPro"/>
</dbReference>
<dbReference type="CDD" id="cd00009">
    <property type="entry name" value="AAA"/>
    <property type="match status" value="1"/>
</dbReference>
<dbReference type="CDD" id="cd19499">
    <property type="entry name" value="RecA-like_ClpB_Hsp104-like"/>
    <property type="match status" value="1"/>
</dbReference>
<dbReference type="FunFam" id="1.10.1780.10:FF:000003">
    <property type="entry name" value="ATP-dependent chaperone ClpB"/>
    <property type="match status" value="1"/>
</dbReference>
<dbReference type="FunFam" id="1.10.8.60:FF:000017">
    <property type="entry name" value="ATP-dependent chaperone ClpB"/>
    <property type="match status" value="1"/>
</dbReference>
<dbReference type="FunFam" id="3.40.50.300:FF:000120">
    <property type="entry name" value="ATP-dependent chaperone ClpB"/>
    <property type="match status" value="1"/>
</dbReference>
<dbReference type="FunFam" id="3.40.50.300:FF:000025">
    <property type="entry name" value="ATP-dependent Clp protease subunit"/>
    <property type="match status" value="1"/>
</dbReference>
<dbReference type="FunFam" id="3.40.50.300:FF:000010">
    <property type="entry name" value="Chaperone clpB 1, putative"/>
    <property type="match status" value="1"/>
</dbReference>
<dbReference type="Gene3D" id="1.10.8.60">
    <property type="match status" value="1"/>
</dbReference>
<dbReference type="Gene3D" id="1.10.1780.10">
    <property type="entry name" value="Clp, N-terminal domain"/>
    <property type="match status" value="1"/>
</dbReference>
<dbReference type="Gene3D" id="3.40.50.300">
    <property type="entry name" value="P-loop containing nucleotide triphosphate hydrolases"/>
    <property type="match status" value="3"/>
</dbReference>
<dbReference type="InterPro" id="IPR003593">
    <property type="entry name" value="AAA+_ATPase"/>
</dbReference>
<dbReference type="InterPro" id="IPR003959">
    <property type="entry name" value="ATPase_AAA_core"/>
</dbReference>
<dbReference type="InterPro" id="IPR017730">
    <property type="entry name" value="Chaperonin_ClpB"/>
</dbReference>
<dbReference type="InterPro" id="IPR019489">
    <property type="entry name" value="Clp_ATPase_C"/>
</dbReference>
<dbReference type="InterPro" id="IPR036628">
    <property type="entry name" value="Clp_N_dom_sf"/>
</dbReference>
<dbReference type="InterPro" id="IPR004176">
    <property type="entry name" value="Clp_R_dom"/>
</dbReference>
<dbReference type="InterPro" id="IPR001270">
    <property type="entry name" value="ClpA/B"/>
</dbReference>
<dbReference type="InterPro" id="IPR018368">
    <property type="entry name" value="ClpA/B_CS1"/>
</dbReference>
<dbReference type="InterPro" id="IPR028299">
    <property type="entry name" value="ClpA/B_CS2"/>
</dbReference>
<dbReference type="InterPro" id="IPR041546">
    <property type="entry name" value="ClpA/ClpB_AAA_lid"/>
</dbReference>
<dbReference type="InterPro" id="IPR050130">
    <property type="entry name" value="ClpA_ClpB"/>
</dbReference>
<dbReference type="InterPro" id="IPR027417">
    <property type="entry name" value="P-loop_NTPase"/>
</dbReference>
<dbReference type="NCBIfam" id="TIGR03346">
    <property type="entry name" value="chaperone_ClpB"/>
    <property type="match status" value="1"/>
</dbReference>
<dbReference type="NCBIfam" id="NF008118">
    <property type="entry name" value="PRK10865.1"/>
    <property type="match status" value="1"/>
</dbReference>
<dbReference type="PANTHER" id="PTHR11638">
    <property type="entry name" value="ATP-DEPENDENT CLP PROTEASE"/>
    <property type="match status" value="1"/>
</dbReference>
<dbReference type="PANTHER" id="PTHR11638:SF18">
    <property type="entry name" value="HEAT SHOCK PROTEIN 104"/>
    <property type="match status" value="1"/>
</dbReference>
<dbReference type="Pfam" id="PF00004">
    <property type="entry name" value="AAA"/>
    <property type="match status" value="1"/>
</dbReference>
<dbReference type="Pfam" id="PF07724">
    <property type="entry name" value="AAA_2"/>
    <property type="match status" value="1"/>
</dbReference>
<dbReference type="Pfam" id="PF17871">
    <property type="entry name" value="AAA_lid_9"/>
    <property type="match status" value="1"/>
</dbReference>
<dbReference type="Pfam" id="PF02861">
    <property type="entry name" value="Clp_N"/>
    <property type="match status" value="2"/>
</dbReference>
<dbReference type="Pfam" id="PF10431">
    <property type="entry name" value="ClpB_D2-small"/>
    <property type="match status" value="1"/>
</dbReference>
<dbReference type="PRINTS" id="PR00300">
    <property type="entry name" value="CLPPROTEASEA"/>
</dbReference>
<dbReference type="SMART" id="SM00382">
    <property type="entry name" value="AAA"/>
    <property type="match status" value="2"/>
</dbReference>
<dbReference type="SMART" id="SM01086">
    <property type="entry name" value="ClpB_D2-small"/>
    <property type="match status" value="1"/>
</dbReference>
<dbReference type="SUPFAM" id="SSF81923">
    <property type="entry name" value="Double Clp-N motif"/>
    <property type="match status" value="1"/>
</dbReference>
<dbReference type="SUPFAM" id="SSF52540">
    <property type="entry name" value="P-loop containing nucleoside triphosphate hydrolases"/>
    <property type="match status" value="2"/>
</dbReference>
<dbReference type="PROSITE" id="PS51903">
    <property type="entry name" value="CLP_R"/>
    <property type="match status" value="1"/>
</dbReference>
<dbReference type="PROSITE" id="PS00870">
    <property type="entry name" value="CLPAB_1"/>
    <property type="match status" value="1"/>
</dbReference>
<dbReference type="PROSITE" id="PS00871">
    <property type="entry name" value="CLPAB_2"/>
    <property type="match status" value="1"/>
</dbReference>
<organism>
    <name type="scientific">Vibrio vulnificus (strain YJ016)</name>
    <dbReference type="NCBI Taxonomy" id="196600"/>
    <lineage>
        <taxon>Bacteria</taxon>
        <taxon>Pseudomonadati</taxon>
        <taxon>Pseudomonadota</taxon>
        <taxon>Gammaproteobacteria</taxon>
        <taxon>Vibrionales</taxon>
        <taxon>Vibrionaceae</taxon>
        <taxon>Vibrio</taxon>
    </lineage>
</organism>
<name>CLPB_VIBVY</name>
<feature type="chain" id="PRO_0000191203" description="Chaperone protein ClpB">
    <location>
        <begin position="1"/>
        <end position="857"/>
    </location>
</feature>
<feature type="domain" description="Clp R" evidence="2">
    <location>
        <begin position="3"/>
        <end position="146"/>
    </location>
</feature>
<feature type="region of interest" description="Repeat 1" evidence="2">
    <location>
        <begin position="6"/>
        <end position="71"/>
    </location>
</feature>
<feature type="region of interest" description="Repeat 2" evidence="2">
    <location>
        <begin position="83"/>
        <end position="146"/>
    </location>
</feature>
<feature type="region of interest" description="NBD1" evidence="1">
    <location>
        <begin position="159"/>
        <end position="340"/>
    </location>
</feature>
<feature type="region of interest" description="Linker" evidence="1">
    <location>
        <begin position="341"/>
        <end position="545"/>
    </location>
</feature>
<feature type="region of interest" description="NBD2" evidence="1">
    <location>
        <begin position="555"/>
        <end position="765"/>
    </location>
</feature>
<feature type="region of interest" description="C-terminal" evidence="1">
    <location>
        <begin position="766"/>
        <end position="857"/>
    </location>
</feature>
<feature type="coiled-coil region" evidence="1">
    <location>
        <begin position="391"/>
        <end position="525"/>
    </location>
</feature>
<feature type="binding site" evidence="1">
    <location>
        <begin position="206"/>
        <end position="213"/>
    </location>
    <ligand>
        <name>ATP</name>
        <dbReference type="ChEBI" id="CHEBI:30616"/>
        <label>1</label>
    </ligand>
</feature>
<feature type="binding site" evidence="1">
    <location>
        <begin position="605"/>
        <end position="612"/>
    </location>
    <ligand>
        <name>ATP</name>
        <dbReference type="ChEBI" id="CHEBI:30616"/>
        <label>2</label>
    </ligand>
</feature>
<proteinExistence type="inferred from homology"/>
<accession>Q7MNK1</accession>
<reference key="1">
    <citation type="journal article" date="2003" name="Genome Res.">
        <title>Comparative genome analysis of Vibrio vulnificus, a marine pathogen.</title>
        <authorList>
            <person name="Chen C.-Y."/>
            <person name="Wu K.-M."/>
            <person name="Chang Y.-C."/>
            <person name="Chang C.-H."/>
            <person name="Tsai H.-C."/>
            <person name="Liao T.-L."/>
            <person name="Liu Y.-M."/>
            <person name="Chen H.-J."/>
            <person name="Shen A.B.-T."/>
            <person name="Li J.-C."/>
            <person name="Su T.-L."/>
            <person name="Shao C.-P."/>
            <person name="Lee C.-T."/>
            <person name="Hor L.-I."/>
            <person name="Tsai S.-F."/>
        </authorList>
    </citation>
    <scope>NUCLEOTIDE SEQUENCE [LARGE SCALE GENOMIC DNA]</scope>
    <source>
        <strain>YJ016</strain>
    </source>
</reference>
<protein>
    <recommendedName>
        <fullName>Chaperone protein ClpB</fullName>
    </recommendedName>
</protein>
<comment type="function">
    <text evidence="1">Part of a stress-induced multi-chaperone system, it is involved in the recovery of the cell from heat-induced damage, in cooperation with DnaK, DnaJ and GrpE. Acts before DnaK, in the processing of protein aggregates. Protein binding stimulates the ATPase activity; ATP hydrolysis unfolds the denatured protein aggregates, which probably helps expose new hydrophobic binding sites on the surface of ClpB-bound aggregates, contributing to the solubilization and refolding of denatured protein aggregates by DnaK (By similarity).</text>
</comment>
<comment type="subunit">
    <text evidence="1">Homohexamer. The oligomerization is ATP-dependent (By similarity).</text>
</comment>
<comment type="subcellular location">
    <subcellularLocation>
        <location evidence="3">Cytoplasm</location>
    </subcellularLocation>
</comment>
<comment type="domain">
    <text evidence="1">The Clp repeat (R) domain probably functions as a substrate-discriminating domain, recruiting aggregated proteins to the ClpB hexamer and/or stabilizing bound proteins. The NBD2 domain is responsible for oligomerization, whereas the NBD1 domain stabilizes the hexamer probably in an ATP-dependent manner. The movement of the coiled-coil domain is essential for ClpB ability to rescue proteins from an aggregated state, probably by pulling apart large aggregated proteins, which are bound between the coiled-coils motifs of adjacent ClpB subunits in the functional hexamer (By similarity).</text>
</comment>
<comment type="similarity">
    <text evidence="3">Belongs to the ClpA/ClpB family.</text>
</comment>
<sequence>MRLDRFTSKFQIAISDAQSLALGRDHQYIEPVHLMVALLDQNGSPIRPLLTILNVDVTHLRSKLSEMLDRLPKVSGIGGDVQLSSAMGAMFNLCDKIAQKRQDAYISSEIFLLAAIEDRGPLGQLFKELGLTEQKVSQAIEQIRGGQKVNDQNAEELRQALEKFTIDLTERAEQGKLDPVIGRDDEIRRTIQVLQRRTKNNPVIIGEPGVGKTAIVEGLAQRIINNEVPEGLRGRRVLSLDMGALVAGAKYRGEFEERLKSVLNELSKEEGNIILFIDELHTMVGAGKGEGSMDAGNMLKPALARGELHCVGATTLDEYRQYIEKDPALERRFQKVLVDEPTVEDTIAILRGLKERYELHHHVEITDPAIVAAASLSHRYVSDRQLPDKAIDLIDEAASSIRMQIDSKPEALDKLERKIIQLKIEQQALSNEHDEASEKRLRSLNEELNEKEREFAELEEIWNAEKAALSGTQHIKAALEQARMDMEFARRAGDLSRMSELQYGRIPELEKQLDLATQAEMQEMTLLKNKVTDNEIAEVLSKQTGIPVSKMLEAEKEKLLRMEEVLHKRVIGQKEAVEVVANAIRRSRAGLSDPNKPIGSFLFLGPTGVGKTELCKTLANFMFDSEDAMVRIDMSEFMEKHSVARLVGAPPGYVGYEEGGYLTEAVRRKPYSVILLDEVEKAHPDVFNILLQVLDDGRLTDGQGRTVDFRNTVVIMTSNLGSSRIQENFAMLDYQGIKEQVMEVVTKHFRPEFLNRVDETVVFHPLSQDHIKSIAAIQLNRLANRMEEHGYQLEVSDKALELIAQVGFDPVYGARPLKRAIQQSIENPLAKSILAGSVLPDKKIQLIVNNDQIVAHQ</sequence>
<keyword id="KW-0067">ATP-binding</keyword>
<keyword id="KW-0143">Chaperone</keyword>
<keyword id="KW-0175">Coiled coil</keyword>
<keyword id="KW-0963">Cytoplasm</keyword>
<keyword id="KW-0547">Nucleotide-binding</keyword>
<keyword id="KW-0677">Repeat</keyword>
<keyword id="KW-0346">Stress response</keyword>
<gene>
    <name type="primary">clpB</name>
    <name type="ordered locus">VV0715</name>
</gene>
<evidence type="ECO:0000250" key="1"/>
<evidence type="ECO:0000255" key="2">
    <source>
        <dbReference type="PROSITE-ProRule" id="PRU01251"/>
    </source>
</evidence>
<evidence type="ECO:0000305" key="3"/>